<reference key="1">
    <citation type="journal article" date="2002" name="Proc. Natl. Acad. Sci. U.S.A.">
        <title>The complete genome of hyperthermophile Methanopyrus kandleri AV19 and monophyly of archaeal methanogens.</title>
        <authorList>
            <person name="Slesarev A.I."/>
            <person name="Mezhevaya K.V."/>
            <person name="Makarova K.S."/>
            <person name="Polushin N.N."/>
            <person name="Shcherbinina O.V."/>
            <person name="Shakhova V.V."/>
            <person name="Belova G.I."/>
            <person name="Aravind L."/>
            <person name="Natale D.A."/>
            <person name="Rogozin I.B."/>
            <person name="Tatusov R.L."/>
            <person name="Wolf Y.I."/>
            <person name="Stetter K.O."/>
            <person name="Malykh A.G."/>
            <person name="Koonin E.V."/>
            <person name="Kozyavkin S.A."/>
        </authorList>
    </citation>
    <scope>NUCLEOTIDE SEQUENCE [LARGE SCALE GENOMIC DNA]</scope>
    <source>
        <strain>AV19 / DSM 6324 / JCM 9639 / NBRC 100938</strain>
    </source>
</reference>
<dbReference type="EC" id="6.3.5.-" evidence="1"/>
<dbReference type="EMBL" id="AE009439">
    <property type="protein sequence ID" value="AAM02173.1"/>
    <property type="molecule type" value="Genomic_DNA"/>
</dbReference>
<dbReference type="RefSeq" id="WP_011019328.1">
    <property type="nucleotide sequence ID" value="NC_003551.1"/>
</dbReference>
<dbReference type="SMR" id="Q8TWS2"/>
<dbReference type="FunCoup" id="Q8TWS2">
    <property type="interactions" value="138"/>
</dbReference>
<dbReference type="STRING" id="190192.MK0960"/>
<dbReference type="PaxDb" id="190192-MK0960"/>
<dbReference type="EnsemblBacteria" id="AAM02173">
    <property type="protein sequence ID" value="AAM02173"/>
    <property type="gene ID" value="MK0960"/>
</dbReference>
<dbReference type="GeneID" id="1477061"/>
<dbReference type="KEGG" id="mka:MK0960"/>
<dbReference type="PATRIC" id="fig|190192.8.peg.1005"/>
<dbReference type="HOGENOM" id="CLU_019240_0_0_2"/>
<dbReference type="InParanoid" id="Q8TWS2"/>
<dbReference type="OrthoDB" id="52755at2157"/>
<dbReference type="Proteomes" id="UP000001826">
    <property type="component" value="Chromosome"/>
</dbReference>
<dbReference type="GO" id="GO:0050566">
    <property type="term" value="F:asparaginyl-tRNA synthase (glutamine-hydrolyzing) activity"/>
    <property type="evidence" value="ECO:0007669"/>
    <property type="project" value="RHEA"/>
</dbReference>
<dbReference type="GO" id="GO:0005524">
    <property type="term" value="F:ATP binding"/>
    <property type="evidence" value="ECO:0007669"/>
    <property type="project" value="UniProtKB-KW"/>
</dbReference>
<dbReference type="GO" id="GO:0050567">
    <property type="term" value="F:glutaminyl-tRNA synthase (glutamine-hydrolyzing) activity"/>
    <property type="evidence" value="ECO:0007669"/>
    <property type="project" value="UniProtKB-UniRule"/>
</dbReference>
<dbReference type="GO" id="GO:0070681">
    <property type="term" value="P:glutaminyl-tRNAGln biosynthesis via transamidation"/>
    <property type="evidence" value="ECO:0007669"/>
    <property type="project" value="TreeGrafter"/>
</dbReference>
<dbReference type="GO" id="GO:0006412">
    <property type="term" value="P:translation"/>
    <property type="evidence" value="ECO:0007669"/>
    <property type="project" value="UniProtKB-UniRule"/>
</dbReference>
<dbReference type="FunFam" id="1.10.10.410:FF:000001">
    <property type="entry name" value="Aspartyl/glutamyl-tRNA(Asn/Gln) amidotransferase subunit B"/>
    <property type="match status" value="1"/>
</dbReference>
<dbReference type="Gene3D" id="1.10.10.410">
    <property type="match status" value="1"/>
</dbReference>
<dbReference type="Gene3D" id="1.10.150.380">
    <property type="entry name" value="GatB domain, N-terminal subdomain"/>
    <property type="match status" value="1"/>
</dbReference>
<dbReference type="HAMAP" id="MF_00121">
    <property type="entry name" value="GatB"/>
    <property type="match status" value="1"/>
</dbReference>
<dbReference type="InterPro" id="IPR017959">
    <property type="entry name" value="Asn/Gln-tRNA_amidoTrfase_suB/E"/>
</dbReference>
<dbReference type="InterPro" id="IPR006075">
    <property type="entry name" value="Asn/Gln-tRNA_Trfase_suB/E_cat"/>
</dbReference>
<dbReference type="InterPro" id="IPR018027">
    <property type="entry name" value="Asn/Gln_amidotransferase"/>
</dbReference>
<dbReference type="InterPro" id="IPR003789">
    <property type="entry name" value="Asn/Gln_tRNA_amidoTrase-B-like"/>
</dbReference>
<dbReference type="InterPro" id="IPR004413">
    <property type="entry name" value="GatB"/>
</dbReference>
<dbReference type="InterPro" id="IPR042114">
    <property type="entry name" value="GatB_C_1"/>
</dbReference>
<dbReference type="InterPro" id="IPR023168">
    <property type="entry name" value="GatB_Yqey_C_2"/>
</dbReference>
<dbReference type="InterPro" id="IPR017958">
    <property type="entry name" value="Gln-tRNA_amidoTrfase_suB_CS"/>
</dbReference>
<dbReference type="InterPro" id="IPR014746">
    <property type="entry name" value="Gln_synth/guanido_kin_cat_dom"/>
</dbReference>
<dbReference type="NCBIfam" id="TIGR00133">
    <property type="entry name" value="gatB"/>
    <property type="match status" value="1"/>
</dbReference>
<dbReference type="NCBIfam" id="NF004012">
    <property type="entry name" value="PRK05477.1-2"/>
    <property type="match status" value="1"/>
</dbReference>
<dbReference type="NCBIfam" id="NF004014">
    <property type="entry name" value="PRK05477.1-4"/>
    <property type="match status" value="1"/>
</dbReference>
<dbReference type="PANTHER" id="PTHR11659">
    <property type="entry name" value="GLUTAMYL-TRNA GLN AMIDOTRANSFERASE SUBUNIT B MITOCHONDRIAL AND PROKARYOTIC PET112-RELATED"/>
    <property type="match status" value="1"/>
</dbReference>
<dbReference type="PANTHER" id="PTHR11659:SF0">
    <property type="entry name" value="GLUTAMYL-TRNA(GLN) AMIDOTRANSFERASE SUBUNIT B, MITOCHONDRIAL"/>
    <property type="match status" value="1"/>
</dbReference>
<dbReference type="Pfam" id="PF02934">
    <property type="entry name" value="GatB_N"/>
    <property type="match status" value="1"/>
</dbReference>
<dbReference type="Pfam" id="PF02637">
    <property type="entry name" value="GatB_Yqey"/>
    <property type="match status" value="1"/>
</dbReference>
<dbReference type="SMART" id="SM00845">
    <property type="entry name" value="GatB_Yqey"/>
    <property type="match status" value="1"/>
</dbReference>
<dbReference type="SUPFAM" id="SSF89095">
    <property type="entry name" value="GatB/YqeY motif"/>
    <property type="match status" value="1"/>
</dbReference>
<dbReference type="SUPFAM" id="SSF55931">
    <property type="entry name" value="Glutamine synthetase/guanido kinase"/>
    <property type="match status" value="1"/>
</dbReference>
<dbReference type="PROSITE" id="PS01234">
    <property type="entry name" value="GATB"/>
    <property type="match status" value="1"/>
</dbReference>
<sequence>MADVKIGFEVHVQLDTRTKLFCDCPTDYEDAEPNENTCPVCTGMPGAKPLPPNEEALLIALEIAHMLDCEPVLDRPLYFQRKHYDYPDLPSGYQRTSVPIAVNGELDGVRIREIHVEEDPGRWEPSTGRVDYNRSGVPLIEIVTEPDMRSPEEARDFLRRLMQVLRYSGKVKGDGGIRVDANVSVEGGARVEIKNINSIKGVYRALRFEIQRQLNLMKHGREVRRETRAFREDQGTTVAMRSKETAEDYRYIPDPDIPVFEITEDLWEKAVARAPEPPHHRARRMAEEYGISLEAAEALVTEREWADFFEEVVEKAPDDWDIEFIDQWVRKEIKKILNKKEMTFREAKITPEEFIELLELVREDKITRQNALNALWEAVDSDKSPVEIIEENGLLKVSDEDRLARVVEEVIEENPQAVEDYKSGKEEAIHYLMGQVMRKTRGQADPEVTMRLLRERLDSDG</sequence>
<gene>
    <name evidence="1" type="primary">gatB</name>
    <name type="ordered locus">MK0960</name>
</gene>
<evidence type="ECO:0000255" key="1">
    <source>
        <dbReference type="HAMAP-Rule" id="MF_00121"/>
    </source>
</evidence>
<comment type="function">
    <text evidence="1">Allows the formation of correctly charged Asn-tRNA(Asn) or Gln-tRNA(Gln) through the transamidation of misacylated Asp-tRNA(Asn) or Glu-tRNA(Gln) in organisms which lack either or both of asparaginyl-tRNA or glutaminyl-tRNA synthetases. The reaction takes place in the presence of glutamine and ATP through an activated phospho-Asp-tRNA(Asn) or phospho-Glu-tRNA(Gln).</text>
</comment>
<comment type="catalytic activity">
    <reaction evidence="1">
        <text>L-glutamyl-tRNA(Gln) + L-glutamine + ATP + H2O = L-glutaminyl-tRNA(Gln) + L-glutamate + ADP + phosphate + H(+)</text>
        <dbReference type="Rhea" id="RHEA:17521"/>
        <dbReference type="Rhea" id="RHEA-COMP:9681"/>
        <dbReference type="Rhea" id="RHEA-COMP:9684"/>
        <dbReference type="ChEBI" id="CHEBI:15377"/>
        <dbReference type="ChEBI" id="CHEBI:15378"/>
        <dbReference type="ChEBI" id="CHEBI:29985"/>
        <dbReference type="ChEBI" id="CHEBI:30616"/>
        <dbReference type="ChEBI" id="CHEBI:43474"/>
        <dbReference type="ChEBI" id="CHEBI:58359"/>
        <dbReference type="ChEBI" id="CHEBI:78520"/>
        <dbReference type="ChEBI" id="CHEBI:78521"/>
        <dbReference type="ChEBI" id="CHEBI:456216"/>
    </reaction>
</comment>
<comment type="catalytic activity">
    <reaction evidence="1">
        <text>L-aspartyl-tRNA(Asn) + L-glutamine + ATP + H2O = L-asparaginyl-tRNA(Asn) + L-glutamate + ADP + phosphate + 2 H(+)</text>
        <dbReference type="Rhea" id="RHEA:14513"/>
        <dbReference type="Rhea" id="RHEA-COMP:9674"/>
        <dbReference type="Rhea" id="RHEA-COMP:9677"/>
        <dbReference type="ChEBI" id="CHEBI:15377"/>
        <dbReference type="ChEBI" id="CHEBI:15378"/>
        <dbReference type="ChEBI" id="CHEBI:29985"/>
        <dbReference type="ChEBI" id="CHEBI:30616"/>
        <dbReference type="ChEBI" id="CHEBI:43474"/>
        <dbReference type="ChEBI" id="CHEBI:58359"/>
        <dbReference type="ChEBI" id="CHEBI:78515"/>
        <dbReference type="ChEBI" id="CHEBI:78516"/>
        <dbReference type="ChEBI" id="CHEBI:456216"/>
    </reaction>
</comment>
<comment type="subunit">
    <text evidence="1">Heterotrimer of A, B and C subunits.</text>
</comment>
<comment type="similarity">
    <text evidence="1">Belongs to the GatB/GatE family. GatB subfamily.</text>
</comment>
<keyword id="KW-0067">ATP-binding</keyword>
<keyword id="KW-0436">Ligase</keyword>
<keyword id="KW-0547">Nucleotide-binding</keyword>
<keyword id="KW-0648">Protein biosynthesis</keyword>
<keyword id="KW-1185">Reference proteome</keyword>
<proteinExistence type="inferred from homology"/>
<feature type="chain" id="PRO_0000148872" description="Aspartyl/glutamyl-tRNA(Asn/Gln) amidotransferase subunit B">
    <location>
        <begin position="1"/>
        <end position="461"/>
    </location>
</feature>
<organism>
    <name type="scientific">Methanopyrus kandleri (strain AV19 / DSM 6324 / JCM 9639 / NBRC 100938)</name>
    <dbReference type="NCBI Taxonomy" id="190192"/>
    <lineage>
        <taxon>Archaea</taxon>
        <taxon>Methanobacteriati</taxon>
        <taxon>Methanobacteriota</taxon>
        <taxon>Methanomada group</taxon>
        <taxon>Methanopyri</taxon>
        <taxon>Methanopyrales</taxon>
        <taxon>Methanopyraceae</taxon>
        <taxon>Methanopyrus</taxon>
    </lineage>
</organism>
<protein>
    <recommendedName>
        <fullName evidence="1">Aspartyl/glutamyl-tRNA(Asn/Gln) amidotransferase subunit B</fullName>
        <shortName evidence="1">Asp/Glu-ADT subunit B</shortName>
        <ecNumber evidence="1">6.3.5.-</ecNumber>
    </recommendedName>
</protein>
<accession>Q8TWS2</accession>
<name>GATB_METKA</name>